<name>LFXI_HAEDE</name>
<protein>
    <recommendedName>
        <fullName evidence="2">Leech factor Xa inhibitor</fullName>
        <shortName evidence="2">Lefaxin</shortName>
    </recommendedName>
</protein>
<feature type="chain" id="PRO_0000397940" description="Leech factor Xa inhibitor">
    <location>
        <begin position="1"/>
        <end position="90" status="greater than"/>
    </location>
</feature>
<feature type="non-consecutive residues" evidence="3">
    <location>
        <begin position="34"/>
        <end position="35"/>
    </location>
</feature>
<feature type="non-consecutive residues" evidence="3">
    <location>
        <begin position="41"/>
        <end position="42"/>
    </location>
</feature>
<feature type="non-consecutive residues" evidence="3">
    <location>
        <begin position="55"/>
        <end position="56"/>
    </location>
</feature>
<feature type="non-consecutive residues" evidence="3">
    <location>
        <begin position="70"/>
        <end position="71"/>
    </location>
</feature>
<feature type="non-terminal residue">
    <location>
        <position position="90"/>
    </location>
</feature>
<organism>
    <name type="scientific">Haementeria depressa</name>
    <name type="common">Leech</name>
    <dbReference type="NCBI Taxonomy" id="279730"/>
    <lineage>
        <taxon>Eukaryota</taxon>
        <taxon>Metazoa</taxon>
        <taxon>Spiralia</taxon>
        <taxon>Lophotrochozoa</taxon>
        <taxon>Annelida</taxon>
        <taxon>Clitellata</taxon>
        <taxon>Hirudinea</taxon>
        <taxon>Rhynchobdellida</taxon>
        <taxon>Glossiphoniidae</taxon>
        <taxon>Haementeria</taxon>
    </lineage>
</organism>
<keyword id="KW-0903">Direct protein sequencing</keyword>
<keyword id="KW-0646">Protease inhibitor</keyword>
<keyword id="KW-0964">Secreted</keyword>
<proteinExistence type="evidence at protein level"/>
<evidence type="ECO:0000269" key="1">
    <source>
    </source>
</evidence>
<evidence type="ECO:0000303" key="2">
    <source>
    </source>
</evidence>
<evidence type="ECO:0000305" key="3"/>
<reference evidence="3" key="1">
    <citation type="journal article" date="1999" name="Thromb. Haemost.">
        <title>A new factor Xa inhibitor (lefaxin) from the Haementeria depressa leech.</title>
        <authorList>
            <person name="Faria F."/>
            <person name="Kelen E.M."/>
            <person name="Sampaio C.A."/>
            <person name="Bon C."/>
            <person name="Duval N."/>
            <person name="Chudzinski-Tavassi A.M."/>
        </authorList>
    </citation>
    <scope>PROTEIN SEQUENCE OF 1-34</scope>
    <scope>FUNCTION</scope>
    <source>
        <tissue evidence="1">Salivary gland</tissue>
    </source>
</reference>
<reference evidence="3" key="2">
    <citation type="submission" date="2010-05" db="UniProtKB">
        <authorList>
            <person name="Faria F."/>
        </authorList>
    </citation>
    <scope>PROTEIN SEQUENCE OF 35-90</scope>
    <source>
        <tissue>Salivary gland</tissue>
    </source>
</reference>
<accession>P86681</accession>
<comment type="function">
    <text evidence="1">Potent anticoagulant inhibiting the amidolytic activity of factor Xa (F10) (Ki=4nM) and reducing its ability to activate prothrombin (F2) in the prothrombinase complex (EC(50)=40nM).</text>
</comment>
<comment type="subcellular location">
    <subcellularLocation>
        <location evidence="3">Secreted</location>
    </subcellularLocation>
</comment>
<comment type="caution">
    <text evidence="3">The order of the peptides shown is unknown.</text>
</comment>
<dbReference type="SMR" id="P86681"/>
<dbReference type="GO" id="GO:0005576">
    <property type="term" value="C:extracellular region"/>
    <property type="evidence" value="ECO:0007669"/>
    <property type="project" value="UniProtKB-SubCell"/>
</dbReference>
<dbReference type="GO" id="GO:0030414">
    <property type="term" value="F:peptidase inhibitor activity"/>
    <property type="evidence" value="ECO:0000314"/>
    <property type="project" value="UniProtKB"/>
</dbReference>
<dbReference type="GO" id="GO:0035899">
    <property type="term" value="P:suppression of blood coagulation in another organism"/>
    <property type="evidence" value="ECO:0000314"/>
    <property type="project" value="UniProtKB"/>
</dbReference>
<sequence>FDVPEPFKWVDHFFYEKLDEQHKGLFFAFFDWGKGPDYWGKDTISLSQEQVDAKFELDLEYGIFYGNGETIENPSENGDLQGIFFSWGSE</sequence>